<accession>Q1I3T0</accession>
<sequence>MTDPRKGDHAEPTTHFGYQDVPESQKAKKVAEVFHSVAAKYDLMNDVLSGGMHRLWKRFTIELSGVRSGNRVLDIAGGTGDLAAKFSRLVGPTGQVVLADINESMLKVGRDRLLDRGVAGNIEFVQADAEKLPFPDNHFDCVTIAFGLRNVTHKDEAIRSMLRVLKPGGRLLVLEFSKPTNKLMSKAYDAYSFAFMPLAGKLITNDSESYRYLAESIRMHPDQETLKAMMVEAGFDRVTYHNMTSGIVAVHRGIKP</sequence>
<proteinExistence type="inferred from homology"/>
<name>UBIE_PSEE4</name>
<comment type="function">
    <text evidence="1">Methyltransferase required for the conversion of demethylmenaquinol (DMKH2) to menaquinol (MKH2) and the conversion of 2-polyprenyl-6-methoxy-1,4-benzoquinol (DDMQH2) to 2-polyprenyl-3-methyl-6-methoxy-1,4-benzoquinol (DMQH2).</text>
</comment>
<comment type="catalytic activity">
    <reaction evidence="1">
        <text>a 2-demethylmenaquinol + S-adenosyl-L-methionine = a menaquinol + S-adenosyl-L-homocysteine + H(+)</text>
        <dbReference type="Rhea" id="RHEA:42640"/>
        <dbReference type="Rhea" id="RHEA-COMP:9539"/>
        <dbReference type="Rhea" id="RHEA-COMP:9563"/>
        <dbReference type="ChEBI" id="CHEBI:15378"/>
        <dbReference type="ChEBI" id="CHEBI:18151"/>
        <dbReference type="ChEBI" id="CHEBI:55437"/>
        <dbReference type="ChEBI" id="CHEBI:57856"/>
        <dbReference type="ChEBI" id="CHEBI:59789"/>
        <dbReference type="EC" id="2.1.1.163"/>
    </reaction>
</comment>
<comment type="catalytic activity">
    <reaction evidence="1">
        <text>a 2-methoxy-6-(all-trans-polyprenyl)benzene-1,4-diol + S-adenosyl-L-methionine = a 5-methoxy-2-methyl-3-(all-trans-polyprenyl)benzene-1,4-diol + S-adenosyl-L-homocysteine + H(+)</text>
        <dbReference type="Rhea" id="RHEA:28286"/>
        <dbReference type="Rhea" id="RHEA-COMP:10858"/>
        <dbReference type="Rhea" id="RHEA-COMP:10859"/>
        <dbReference type="ChEBI" id="CHEBI:15378"/>
        <dbReference type="ChEBI" id="CHEBI:57856"/>
        <dbReference type="ChEBI" id="CHEBI:59789"/>
        <dbReference type="ChEBI" id="CHEBI:84166"/>
        <dbReference type="ChEBI" id="CHEBI:84167"/>
        <dbReference type="EC" id="2.1.1.201"/>
    </reaction>
</comment>
<comment type="pathway">
    <text evidence="1">Quinol/quinone metabolism; menaquinone biosynthesis; menaquinol from 1,4-dihydroxy-2-naphthoate: step 2/2.</text>
</comment>
<comment type="pathway">
    <text evidence="1">Cofactor biosynthesis; ubiquinone biosynthesis.</text>
</comment>
<comment type="similarity">
    <text evidence="1">Belongs to the class I-like SAM-binding methyltransferase superfamily. MenG/UbiE family.</text>
</comment>
<protein>
    <recommendedName>
        <fullName evidence="1">Ubiquinone/menaquinone biosynthesis C-methyltransferase UbiE</fullName>
        <ecNumber evidence="1">2.1.1.163</ecNumber>
        <ecNumber evidence="1">2.1.1.201</ecNumber>
    </recommendedName>
    <alternativeName>
        <fullName evidence="1">2-methoxy-6-polyprenyl-1,4-benzoquinol methylase</fullName>
    </alternativeName>
    <alternativeName>
        <fullName evidence="1">Demethylmenaquinone methyltransferase</fullName>
    </alternativeName>
</protein>
<gene>
    <name evidence="1" type="primary">ubiE</name>
    <name type="ordered locus">PSEEN5073</name>
</gene>
<evidence type="ECO:0000255" key="1">
    <source>
        <dbReference type="HAMAP-Rule" id="MF_01813"/>
    </source>
</evidence>
<evidence type="ECO:0000256" key="2">
    <source>
        <dbReference type="SAM" id="MobiDB-lite"/>
    </source>
</evidence>
<reference key="1">
    <citation type="journal article" date="2006" name="Nat. Biotechnol.">
        <title>Complete genome sequence of the entomopathogenic and metabolically versatile soil bacterium Pseudomonas entomophila.</title>
        <authorList>
            <person name="Vodovar N."/>
            <person name="Vallenet D."/>
            <person name="Cruveiller S."/>
            <person name="Rouy Z."/>
            <person name="Barbe V."/>
            <person name="Acosta C."/>
            <person name="Cattolico L."/>
            <person name="Jubin C."/>
            <person name="Lajus A."/>
            <person name="Segurens B."/>
            <person name="Vacherie B."/>
            <person name="Wincker P."/>
            <person name="Weissenbach J."/>
            <person name="Lemaitre B."/>
            <person name="Medigue C."/>
            <person name="Boccard F."/>
        </authorList>
    </citation>
    <scope>NUCLEOTIDE SEQUENCE [LARGE SCALE GENOMIC DNA]</scope>
    <source>
        <strain>L48</strain>
    </source>
</reference>
<keyword id="KW-0474">Menaquinone biosynthesis</keyword>
<keyword id="KW-0489">Methyltransferase</keyword>
<keyword id="KW-0949">S-adenosyl-L-methionine</keyword>
<keyword id="KW-0808">Transferase</keyword>
<keyword id="KW-0831">Ubiquinone biosynthesis</keyword>
<dbReference type="EC" id="2.1.1.163" evidence="1"/>
<dbReference type="EC" id="2.1.1.201" evidence="1"/>
<dbReference type="EMBL" id="CT573326">
    <property type="protein sequence ID" value="CAK17706.1"/>
    <property type="molecule type" value="Genomic_DNA"/>
</dbReference>
<dbReference type="RefSeq" id="WP_011536066.1">
    <property type="nucleotide sequence ID" value="NC_008027.1"/>
</dbReference>
<dbReference type="SMR" id="Q1I3T0"/>
<dbReference type="STRING" id="384676.PSEEN5073"/>
<dbReference type="GeneID" id="32808011"/>
<dbReference type="KEGG" id="pen:PSEEN5073"/>
<dbReference type="eggNOG" id="COG2226">
    <property type="taxonomic scope" value="Bacteria"/>
</dbReference>
<dbReference type="HOGENOM" id="CLU_037990_0_0_6"/>
<dbReference type="OrthoDB" id="9808140at2"/>
<dbReference type="UniPathway" id="UPA00079">
    <property type="reaction ID" value="UER00169"/>
</dbReference>
<dbReference type="UniPathway" id="UPA00232"/>
<dbReference type="Proteomes" id="UP000000658">
    <property type="component" value="Chromosome"/>
</dbReference>
<dbReference type="GO" id="GO:0008425">
    <property type="term" value="F:2-methoxy-6-polyprenyl-1,4-benzoquinol methyltransferase activity"/>
    <property type="evidence" value="ECO:0007669"/>
    <property type="project" value="UniProtKB-UniRule"/>
</dbReference>
<dbReference type="GO" id="GO:0043770">
    <property type="term" value="F:demethylmenaquinone methyltransferase activity"/>
    <property type="evidence" value="ECO:0007669"/>
    <property type="project" value="UniProtKB-UniRule"/>
</dbReference>
<dbReference type="GO" id="GO:0009060">
    <property type="term" value="P:aerobic respiration"/>
    <property type="evidence" value="ECO:0007669"/>
    <property type="project" value="UniProtKB-UniRule"/>
</dbReference>
<dbReference type="GO" id="GO:0009234">
    <property type="term" value="P:menaquinone biosynthetic process"/>
    <property type="evidence" value="ECO:0007669"/>
    <property type="project" value="UniProtKB-UniRule"/>
</dbReference>
<dbReference type="GO" id="GO:0032259">
    <property type="term" value="P:methylation"/>
    <property type="evidence" value="ECO:0007669"/>
    <property type="project" value="UniProtKB-KW"/>
</dbReference>
<dbReference type="CDD" id="cd02440">
    <property type="entry name" value="AdoMet_MTases"/>
    <property type="match status" value="1"/>
</dbReference>
<dbReference type="FunFam" id="3.40.50.150:FF:000014">
    <property type="entry name" value="Ubiquinone/menaquinone biosynthesis C-methyltransferase UbiE"/>
    <property type="match status" value="1"/>
</dbReference>
<dbReference type="Gene3D" id="3.40.50.150">
    <property type="entry name" value="Vaccinia Virus protein VP39"/>
    <property type="match status" value="1"/>
</dbReference>
<dbReference type="HAMAP" id="MF_01813">
    <property type="entry name" value="MenG_UbiE_methyltr"/>
    <property type="match status" value="1"/>
</dbReference>
<dbReference type="InterPro" id="IPR029063">
    <property type="entry name" value="SAM-dependent_MTases_sf"/>
</dbReference>
<dbReference type="InterPro" id="IPR004033">
    <property type="entry name" value="UbiE/COQ5_MeTrFase"/>
</dbReference>
<dbReference type="InterPro" id="IPR023576">
    <property type="entry name" value="UbiE/COQ5_MeTrFase_CS"/>
</dbReference>
<dbReference type="NCBIfam" id="TIGR01934">
    <property type="entry name" value="MenG_MenH_UbiE"/>
    <property type="match status" value="1"/>
</dbReference>
<dbReference type="NCBIfam" id="NF001240">
    <property type="entry name" value="PRK00216.1-1"/>
    <property type="match status" value="1"/>
</dbReference>
<dbReference type="NCBIfam" id="NF001244">
    <property type="entry name" value="PRK00216.1-5"/>
    <property type="match status" value="1"/>
</dbReference>
<dbReference type="PANTHER" id="PTHR43591:SF24">
    <property type="entry name" value="2-METHOXY-6-POLYPRENYL-1,4-BENZOQUINOL METHYLASE, MITOCHONDRIAL"/>
    <property type="match status" value="1"/>
</dbReference>
<dbReference type="PANTHER" id="PTHR43591">
    <property type="entry name" value="METHYLTRANSFERASE"/>
    <property type="match status" value="1"/>
</dbReference>
<dbReference type="Pfam" id="PF01209">
    <property type="entry name" value="Ubie_methyltran"/>
    <property type="match status" value="1"/>
</dbReference>
<dbReference type="SUPFAM" id="SSF53335">
    <property type="entry name" value="S-adenosyl-L-methionine-dependent methyltransferases"/>
    <property type="match status" value="1"/>
</dbReference>
<dbReference type="PROSITE" id="PS51608">
    <property type="entry name" value="SAM_MT_UBIE"/>
    <property type="match status" value="1"/>
</dbReference>
<dbReference type="PROSITE" id="PS01183">
    <property type="entry name" value="UBIE_1"/>
    <property type="match status" value="1"/>
</dbReference>
<dbReference type="PROSITE" id="PS01184">
    <property type="entry name" value="UBIE_2"/>
    <property type="match status" value="1"/>
</dbReference>
<organism>
    <name type="scientific">Pseudomonas entomophila (strain L48)</name>
    <dbReference type="NCBI Taxonomy" id="384676"/>
    <lineage>
        <taxon>Bacteria</taxon>
        <taxon>Pseudomonadati</taxon>
        <taxon>Pseudomonadota</taxon>
        <taxon>Gammaproteobacteria</taxon>
        <taxon>Pseudomonadales</taxon>
        <taxon>Pseudomonadaceae</taxon>
        <taxon>Pseudomonas</taxon>
    </lineage>
</organism>
<feature type="chain" id="PRO_1000056273" description="Ubiquinone/menaquinone biosynthesis C-methyltransferase UbiE">
    <location>
        <begin position="1"/>
        <end position="256"/>
    </location>
</feature>
<feature type="region of interest" description="Disordered" evidence="2">
    <location>
        <begin position="1"/>
        <end position="21"/>
    </location>
</feature>
<feature type="compositionally biased region" description="Basic and acidic residues" evidence="2">
    <location>
        <begin position="1"/>
        <end position="12"/>
    </location>
</feature>
<feature type="binding site" evidence="1">
    <location>
        <position position="79"/>
    </location>
    <ligand>
        <name>S-adenosyl-L-methionine</name>
        <dbReference type="ChEBI" id="CHEBI:59789"/>
    </ligand>
</feature>
<feature type="binding site" evidence="1">
    <location>
        <position position="100"/>
    </location>
    <ligand>
        <name>S-adenosyl-L-methionine</name>
        <dbReference type="ChEBI" id="CHEBI:59789"/>
    </ligand>
</feature>
<feature type="binding site" evidence="1">
    <location>
        <begin position="128"/>
        <end position="129"/>
    </location>
    <ligand>
        <name>S-adenosyl-L-methionine</name>
        <dbReference type="ChEBI" id="CHEBI:59789"/>
    </ligand>
</feature>